<organism>
    <name type="scientific">Pseudomonas aeruginosa (strain ATCC 15692 / DSM 22644 / CIP 104116 / JCM 14847 / LMG 12228 / 1C / PRS 101 / PAO1)</name>
    <dbReference type="NCBI Taxonomy" id="208964"/>
    <lineage>
        <taxon>Bacteria</taxon>
        <taxon>Pseudomonadati</taxon>
        <taxon>Pseudomonadota</taxon>
        <taxon>Gammaproteobacteria</taxon>
        <taxon>Pseudomonadales</taxon>
        <taxon>Pseudomonadaceae</taxon>
        <taxon>Pseudomonas</taxon>
    </lineage>
</organism>
<gene>
    <name evidence="1" type="primary">glnA</name>
    <name type="ordered locus">PA5119</name>
</gene>
<accession>Q9HU65</accession>
<reference key="1">
    <citation type="journal article" date="2000" name="Nature">
        <title>Complete genome sequence of Pseudomonas aeruginosa PAO1, an opportunistic pathogen.</title>
        <authorList>
            <person name="Stover C.K."/>
            <person name="Pham X.-Q.T."/>
            <person name="Erwin A.L."/>
            <person name="Mizoguchi S.D."/>
            <person name="Warrener P."/>
            <person name="Hickey M.J."/>
            <person name="Brinkman F.S.L."/>
            <person name="Hufnagle W.O."/>
            <person name="Kowalik D.J."/>
            <person name="Lagrou M."/>
            <person name="Garber R.L."/>
            <person name="Goltry L."/>
            <person name="Tolentino E."/>
            <person name="Westbrock-Wadman S."/>
            <person name="Yuan Y."/>
            <person name="Brody L.L."/>
            <person name="Coulter S.N."/>
            <person name="Folger K.R."/>
            <person name="Kas A."/>
            <person name="Larbig K."/>
            <person name="Lim R.M."/>
            <person name="Smith K.A."/>
            <person name="Spencer D.H."/>
            <person name="Wong G.K.-S."/>
            <person name="Wu Z."/>
            <person name="Paulsen I.T."/>
            <person name="Reizer J."/>
            <person name="Saier M.H. Jr."/>
            <person name="Hancock R.E.W."/>
            <person name="Lory S."/>
            <person name="Olson M.V."/>
        </authorList>
    </citation>
    <scope>NUCLEOTIDE SEQUENCE [LARGE SCALE GENOMIC DNA]</scope>
    <source>
        <strain>ATCC 15692 / DSM 22644 / CIP 104116 / JCM 14847 / LMG 12228 / 1C / PRS 101 / PAO1</strain>
    </source>
</reference>
<reference evidence="8" key="2">
    <citation type="thesis" date="2005" institute="Ben-Gurion University" country="Israel">
        <title>Biofouling in water treatment systems: effect of membrane properties on biofilm formation.</title>
        <authorList>
            <person name="Liddor M."/>
        </authorList>
    </citation>
    <scope>PROTEIN SEQUENCE OF 37-59; 118-140; 142-150; 152-170; 178-193; 432-447 AND 456-469</scope>
    <source>
        <strain>ATCC 33467 / type 1 smooth</strain>
        <strain>ATCC 33468 / type 2 mucoid</strain>
    </source>
</reference>
<proteinExistence type="evidence at protein level"/>
<name>GLN1B_PSEAE</name>
<feature type="chain" id="PRO_0000153251" description="Glutamine synthetase">
    <location>
        <begin position="1"/>
        <end position="469"/>
    </location>
</feature>
<feature type="domain" description="GS beta-grasp" evidence="6">
    <location>
        <begin position="12"/>
        <end position="97"/>
    </location>
</feature>
<feature type="domain" description="GS catalytic" evidence="7">
    <location>
        <begin position="105"/>
        <end position="469"/>
    </location>
</feature>
<feature type="binding site" evidence="4">
    <location>
        <position position="130"/>
    </location>
    <ligand>
        <name>Mg(2+)</name>
        <dbReference type="ChEBI" id="CHEBI:18420"/>
        <label>1</label>
    </ligand>
</feature>
<feature type="binding site" evidence="4">
    <location>
        <position position="132"/>
    </location>
    <ligand>
        <name>Mg(2+)</name>
        <dbReference type="ChEBI" id="CHEBI:18420"/>
        <label>2</label>
    </ligand>
</feature>
<feature type="binding site" evidence="1">
    <location>
        <position position="208"/>
    </location>
    <ligand>
        <name>ATP</name>
        <dbReference type="ChEBI" id="CHEBI:30616"/>
    </ligand>
</feature>
<feature type="binding site" evidence="4">
    <location>
        <position position="213"/>
    </location>
    <ligand>
        <name>Mg(2+)</name>
        <dbReference type="ChEBI" id="CHEBI:18420"/>
        <label>2</label>
    </ligand>
</feature>
<feature type="binding site" evidence="4">
    <location>
        <position position="221"/>
    </location>
    <ligand>
        <name>Mg(2+)</name>
        <dbReference type="ChEBI" id="CHEBI:18420"/>
        <label>2</label>
    </ligand>
</feature>
<feature type="binding site" evidence="1">
    <location>
        <begin position="265"/>
        <end position="266"/>
    </location>
    <ligand>
        <name>L-glutamate</name>
        <dbReference type="ChEBI" id="CHEBI:29985"/>
    </ligand>
</feature>
<feature type="binding site" evidence="2">
    <location>
        <position position="266"/>
    </location>
    <ligand>
        <name>L-glutamate</name>
        <dbReference type="ChEBI" id="CHEBI:29985"/>
    </ligand>
</feature>
<feature type="binding site" evidence="4">
    <location>
        <position position="270"/>
    </location>
    <ligand>
        <name>Mg(2+)</name>
        <dbReference type="ChEBI" id="CHEBI:18420"/>
        <label>1</label>
    </ligand>
</feature>
<feature type="binding site" evidence="1">
    <location>
        <begin position="272"/>
        <end position="274"/>
    </location>
    <ligand>
        <name>ATP</name>
        <dbReference type="ChEBI" id="CHEBI:30616"/>
    </ligand>
</feature>
<feature type="binding site" evidence="3">
    <location>
        <position position="274"/>
    </location>
    <ligand>
        <name>ATP</name>
        <dbReference type="ChEBI" id="CHEBI:30616"/>
    </ligand>
</feature>
<feature type="binding site" evidence="1">
    <location>
        <position position="322"/>
    </location>
    <ligand>
        <name>L-glutamate</name>
        <dbReference type="ChEBI" id="CHEBI:29985"/>
    </ligand>
</feature>
<feature type="binding site" evidence="1">
    <location>
        <position position="328"/>
    </location>
    <ligand>
        <name>L-glutamate</name>
        <dbReference type="ChEBI" id="CHEBI:29985"/>
    </ligand>
</feature>
<feature type="binding site" evidence="4">
    <location>
        <position position="340"/>
    </location>
    <ligand>
        <name>ATP</name>
        <dbReference type="ChEBI" id="CHEBI:30616"/>
    </ligand>
</feature>
<feature type="binding site" evidence="4">
    <location>
        <position position="340"/>
    </location>
    <ligand>
        <name>L-glutamate</name>
        <dbReference type="ChEBI" id="CHEBI:29985"/>
    </ligand>
</feature>
<feature type="binding site" evidence="4">
    <location>
        <position position="345"/>
    </location>
    <ligand>
        <name>ATP</name>
        <dbReference type="ChEBI" id="CHEBI:30616"/>
    </ligand>
</feature>
<feature type="binding site" evidence="3">
    <location>
        <position position="353"/>
    </location>
    <ligand>
        <name>ATP</name>
        <dbReference type="ChEBI" id="CHEBI:30616"/>
    </ligand>
</feature>
<feature type="binding site" evidence="4">
    <location>
        <position position="358"/>
    </location>
    <ligand>
        <name>Mg(2+)</name>
        <dbReference type="ChEBI" id="CHEBI:18420"/>
        <label>1</label>
    </ligand>
</feature>
<feature type="binding site" evidence="1">
    <location>
        <position position="360"/>
    </location>
    <ligand>
        <name>L-glutamate</name>
        <dbReference type="ChEBI" id="CHEBI:29985"/>
    </ligand>
</feature>
<feature type="modified residue" description="O-AMP-tyrosine" evidence="4">
    <location>
        <position position="398"/>
    </location>
</feature>
<keyword id="KW-0002">3D-structure</keyword>
<keyword id="KW-0067">ATP-binding</keyword>
<keyword id="KW-0963">Cytoplasm</keyword>
<keyword id="KW-0903">Direct protein sequencing</keyword>
<keyword id="KW-0436">Ligase</keyword>
<keyword id="KW-0460">Magnesium</keyword>
<keyword id="KW-0479">Metal-binding</keyword>
<keyword id="KW-0547">Nucleotide-binding</keyword>
<keyword id="KW-0597">Phosphoprotein</keyword>
<keyword id="KW-1185">Reference proteome</keyword>
<protein>
    <recommendedName>
        <fullName evidence="1">Glutamine synthetase</fullName>
        <shortName evidence="1">GS</shortName>
        <ecNumber evidence="1">6.3.1.2</ecNumber>
    </recommendedName>
    <alternativeName>
        <fullName evidence="8">Glutamate--ammonia ligase</fullName>
    </alternativeName>
    <alternativeName>
        <fullName evidence="1">Glutamine synthetase I beta</fullName>
        <shortName evidence="1">GSI beta</shortName>
    </alternativeName>
</protein>
<dbReference type="EC" id="6.3.1.2" evidence="1"/>
<dbReference type="EMBL" id="AE004091">
    <property type="protein sequence ID" value="AAG08504.1"/>
    <property type="molecule type" value="Genomic_DNA"/>
</dbReference>
<dbReference type="PIR" id="G83005">
    <property type="entry name" value="G83005"/>
</dbReference>
<dbReference type="RefSeq" id="NP_253806.1">
    <property type="nucleotide sequence ID" value="NC_002516.2"/>
</dbReference>
<dbReference type="RefSeq" id="WP_003096016.1">
    <property type="nucleotide sequence ID" value="NZ_QZGE01000002.1"/>
</dbReference>
<dbReference type="PDB" id="8FBP">
    <property type="method" value="EM"/>
    <property type="resolution" value="2.80 A"/>
    <property type="chains" value="A/B/C/D/E/F/G/H/I/J/K/L/M/N/O/P/Q/R/S/T/U/V/W/X/Y/Z/a/b=1-469"/>
</dbReference>
<dbReference type="PDBsum" id="8FBP"/>
<dbReference type="EMDB" id="EMD-28965"/>
<dbReference type="SMR" id="Q9HU65"/>
<dbReference type="FunCoup" id="Q9HU65">
    <property type="interactions" value="704"/>
</dbReference>
<dbReference type="STRING" id="208964.PA5119"/>
<dbReference type="PaxDb" id="208964-PA5119"/>
<dbReference type="GeneID" id="77223648"/>
<dbReference type="GeneID" id="877688"/>
<dbReference type="KEGG" id="pae:PA5119"/>
<dbReference type="PATRIC" id="fig|208964.12.peg.5365"/>
<dbReference type="PseudoCAP" id="PA5119"/>
<dbReference type="HOGENOM" id="CLU_017290_1_2_6"/>
<dbReference type="InParanoid" id="Q9HU65"/>
<dbReference type="OrthoDB" id="9807095at2"/>
<dbReference type="PhylomeDB" id="Q9HU65"/>
<dbReference type="BioCyc" id="PAER208964:G1FZ6-5234-MONOMER"/>
<dbReference type="Proteomes" id="UP000002438">
    <property type="component" value="Chromosome"/>
</dbReference>
<dbReference type="GO" id="GO:0005737">
    <property type="term" value="C:cytoplasm"/>
    <property type="evidence" value="ECO:0000318"/>
    <property type="project" value="GO_Central"/>
</dbReference>
<dbReference type="GO" id="GO:0016020">
    <property type="term" value="C:membrane"/>
    <property type="evidence" value="ECO:0000318"/>
    <property type="project" value="GO_Central"/>
</dbReference>
<dbReference type="GO" id="GO:0005524">
    <property type="term" value="F:ATP binding"/>
    <property type="evidence" value="ECO:0007669"/>
    <property type="project" value="UniProtKB-KW"/>
</dbReference>
<dbReference type="GO" id="GO:0004356">
    <property type="term" value="F:glutamine synthetase activity"/>
    <property type="evidence" value="ECO:0000318"/>
    <property type="project" value="GO_Central"/>
</dbReference>
<dbReference type="GO" id="GO:0046872">
    <property type="term" value="F:metal ion binding"/>
    <property type="evidence" value="ECO:0007669"/>
    <property type="project" value="UniProtKB-KW"/>
</dbReference>
<dbReference type="GO" id="GO:0006542">
    <property type="term" value="P:glutamine biosynthetic process"/>
    <property type="evidence" value="ECO:0000318"/>
    <property type="project" value="GO_Central"/>
</dbReference>
<dbReference type="GO" id="GO:0019740">
    <property type="term" value="P:nitrogen utilization"/>
    <property type="evidence" value="ECO:0000318"/>
    <property type="project" value="GO_Central"/>
</dbReference>
<dbReference type="FunFam" id="3.10.20.70:FF:000001">
    <property type="entry name" value="Glutamine synthetase"/>
    <property type="match status" value="1"/>
</dbReference>
<dbReference type="FunFam" id="3.30.590.10:FF:000001">
    <property type="entry name" value="Glutamine synthetase"/>
    <property type="match status" value="1"/>
</dbReference>
<dbReference type="Gene3D" id="3.10.20.70">
    <property type="entry name" value="Glutamine synthetase, N-terminal domain"/>
    <property type="match status" value="1"/>
</dbReference>
<dbReference type="Gene3D" id="3.30.590.10">
    <property type="entry name" value="Glutamine synthetase/guanido kinase, catalytic domain"/>
    <property type="match status" value="1"/>
</dbReference>
<dbReference type="InterPro" id="IPR008147">
    <property type="entry name" value="Gln_synt_N"/>
</dbReference>
<dbReference type="InterPro" id="IPR036651">
    <property type="entry name" value="Gln_synt_N_sf"/>
</dbReference>
<dbReference type="InterPro" id="IPR014746">
    <property type="entry name" value="Gln_synth/guanido_kin_cat_dom"/>
</dbReference>
<dbReference type="InterPro" id="IPR008146">
    <property type="entry name" value="Gln_synth_cat_dom"/>
</dbReference>
<dbReference type="InterPro" id="IPR027303">
    <property type="entry name" value="Gln_synth_gly_rich_site"/>
</dbReference>
<dbReference type="InterPro" id="IPR004809">
    <property type="entry name" value="Gln_synth_I"/>
</dbReference>
<dbReference type="InterPro" id="IPR001637">
    <property type="entry name" value="Gln_synth_I_adenylation_site"/>
</dbReference>
<dbReference type="InterPro" id="IPR027302">
    <property type="entry name" value="Gln_synth_N_conserv_site"/>
</dbReference>
<dbReference type="NCBIfam" id="TIGR00653">
    <property type="entry name" value="GlnA"/>
    <property type="match status" value="1"/>
</dbReference>
<dbReference type="NCBIfam" id="NF007006">
    <property type="entry name" value="PRK09469.1"/>
    <property type="match status" value="1"/>
</dbReference>
<dbReference type="PANTHER" id="PTHR43407">
    <property type="entry name" value="GLUTAMINE SYNTHETASE"/>
    <property type="match status" value="1"/>
</dbReference>
<dbReference type="PANTHER" id="PTHR43407:SF2">
    <property type="entry name" value="GLUTAMINE SYNTHETASE"/>
    <property type="match status" value="1"/>
</dbReference>
<dbReference type="Pfam" id="PF00120">
    <property type="entry name" value="Gln-synt_C"/>
    <property type="match status" value="1"/>
</dbReference>
<dbReference type="Pfam" id="PF03951">
    <property type="entry name" value="Gln-synt_N"/>
    <property type="match status" value="1"/>
</dbReference>
<dbReference type="SMART" id="SM01230">
    <property type="entry name" value="Gln-synt_C"/>
    <property type="match status" value="1"/>
</dbReference>
<dbReference type="SUPFAM" id="SSF54368">
    <property type="entry name" value="Glutamine synthetase, N-terminal domain"/>
    <property type="match status" value="1"/>
</dbReference>
<dbReference type="SUPFAM" id="SSF55931">
    <property type="entry name" value="Glutamine synthetase/guanido kinase"/>
    <property type="match status" value="1"/>
</dbReference>
<dbReference type="PROSITE" id="PS00180">
    <property type="entry name" value="GLNA_1"/>
    <property type="match status" value="1"/>
</dbReference>
<dbReference type="PROSITE" id="PS00182">
    <property type="entry name" value="GLNA_ADENYLATION"/>
    <property type="match status" value="1"/>
</dbReference>
<dbReference type="PROSITE" id="PS00181">
    <property type="entry name" value="GLNA_ATP"/>
    <property type="match status" value="1"/>
</dbReference>
<dbReference type="PROSITE" id="PS51986">
    <property type="entry name" value="GS_BETA_GRASP"/>
    <property type="match status" value="1"/>
</dbReference>
<dbReference type="PROSITE" id="PS51987">
    <property type="entry name" value="GS_CATALYTIC"/>
    <property type="match status" value="1"/>
</dbReference>
<evidence type="ECO:0000250" key="1">
    <source>
        <dbReference type="UniProtKB" id="P0A1P6"/>
    </source>
</evidence>
<evidence type="ECO:0000250" key="2">
    <source>
        <dbReference type="UniProtKB" id="P12425"/>
    </source>
</evidence>
<evidence type="ECO:0000250" key="3">
    <source>
        <dbReference type="UniProtKB" id="P77961"/>
    </source>
</evidence>
<evidence type="ECO:0000250" key="4">
    <source>
        <dbReference type="UniProtKB" id="P9WN39"/>
    </source>
</evidence>
<evidence type="ECO:0000250" key="5">
    <source>
        <dbReference type="UniProtKB" id="Q3V5W6"/>
    </source>
</evidence>
<evidence type="ECO:0000255" key="6">
    <source>
        <dbReference type="PROSITE-ProRule" id="PRU01330"/>
    </source>
</evidence>
<evidence type="ECO:0000255" key="7">
    <source>
        <dbReference type="PROSITE-ProRule" id="PRU01331"/>
    </source>
</evidence>
<evidence type="ECO:0000305" key="8"/>
<sequence>MSYKSHQLIKDHDVKWVDLRFTDTKGKQQHVTMPARDALDDEFFEAGKMFDGSSIAGWKGIEASDMILMPDDSTAVLDPFTEEPTLILVCDIIEPSTMQGYERDPRNIAKRAEEYLKSTGIGDTVFVGPEPEFFIFDEVKFKSDISGSMFKIFSEQASWNTDADIESGNKGHRPGVKGGYFPVPPVDHDHEIRTAMCNALEEMGLVVEVHHHEVATAGQNEIGVKFNTLVAKADEVQTLKYCVHNVADAYGKTVTFMPKPLYGDNGSGMHVHMSISKDGKNTFAGEGYAGLSETALYFIGGIIKHGKALNGFTNPSTNSYKRLVPGFEAPVMLAYSARNRSASIRIPYVSSPKARRIEARFPDPAANPYLAFAALLMAGLDGIQNKIHPGDAADKNLYDLPPEEAKEIPQVCGSLKEALEELDKGRAFLTKGGVFTDEFIDAYIELKSEEEIKVRTFVHPLEYDLYYSV</sequence>
<comment type="function">
    <text evidence="1">Catalyzes the ATP-dependent biosynthesis of glutamine from glutamate and ammonia.</text>
</comment>
<comment type="catalytic activity">
    <reaction evidence="1">
        <text>L-glutamate + NH4(+) + ATP = L-glutamine + ADP + phosphate + H(+)</text>
        <dbReference type="Rhea" id="RHEA:16169"/>
        <dbReference type="ChEBI" id="CHEBI:15378"/>
        <dbReference type="ChEBI" id="CHEBI:28938"/>
        <dbReference type="ChEBI" id="CHEBI:29985"/>
        <dbReference type="ChEBI" id="CHEBI:30616"/>
        <dbReference type="ChEBI" id="CHEBI:43474"/>
        <dbReference type="ChEBI" id="CHEBI:58359"/>
        <dbReference type="ChEBI" id="CHEBI:456216"/>
        <dbReference type="EC" id="6.3.1.2"/>
    </reaction>
</comment>
<comment type="cofactor">
    <cofactor evidence="4">
        <name>Mg(2+)</name>
        <dbReference type="ChEBI" id="CHEBI:18420"/>
    </cofactor>
    <text evidence="4">Binds 2 Mg(2+) ions per subunit.</text>
</comment>
<comment type="activity regulation">
    <text evidence="5">The activity of this enzyme could be controlled by adenylation under conditions of abundant glutamine.</text>
</comment>
<comment type="subunit">
    <text evidence="1">Oligomer of 12 subunits arranged in the form of two hexameric ring.</text>
</comment>
<comment type="subcellular location">
    <subcellularLocation>
        <location evidence="4">Cytoplasm</location>
    </subcellularLocation>
</comment>
<comment type="similarity">
    <text evidence="8">Belongs to the glutamine synthetase family.</text>
</comment>